<sequence length="190" mass="21807">MGKSNSKLKPEVVEELTRKTYFTEKEVQQWYKGFIKDCPSGQLDAAGFQKIYKQFFPFGDPTKFATFVFNVFDENKDGRIGFSEFIQALSVTSRGTLDEKLRWAFKLYDLDNDGYITRNEMLDIVDAIYQMVGNTVELPEEENTPEKRVDRIFAMMDKNADGKLTLQEFQEGSKADPSIVQALSLYDGLV</sequence>
<comment type="function">
    <text evidence="1">Neuronal calcium sensor, regulator of G protein-coupled receptor phosphorylation in a calcium dependent manner. Directly regulates GRK1 (RHOK), but not GRK2 to GRK5. Can substitute for calmodulin (By similarity). Stimulates PI4KB kinase activity (By similarity). Involved in long-term synaptic plasticity through its interaction with PICK1 (By similarity). May also play a role in neuron differentiation through inhibition of the activity of N-type voltage-gated calcium channel (By similarity).</text>
</comment>
<comment type="subunit">
    <text evidence="2 3">Monomer (By similarity). Interacts with KCND2 (By similarity). Interacts in a calcium-independent manner with PI4KB (By similarity). This binding competes with CALN2/CABP7 binding to PI4KB (By similarity). Interacts in a calcium-dependent manner with PICK1 (via AH domain) (By similarity). Interacts with ARF1, ARF3, ARF5 and ARF6 (By similarity). Interacts with IL1RAPL1 (By similarity). Interacts with RIC8A; interaction is favored in the absence of Ca(2+) and myristoylation of NCS1 is not required (By similarity).</text>
</comment>
<comment type="subcellular location">
    <subcellularLocation>
        <location evidence="2">Golgi apparatus</location>
    </subcellularLocation>
    <subcellularLocation>
        <location evidence="2">Postsynaptic density</location>
    </subcellularLocation>
    <subcellularLocation>
        <location evidence="2">Cytoplasm</location>
        <location evidence="2">Perinuclear region</location>
    </subcellularLocation>
    <subcellularLocation>
        <location evidence="3">Cytoplasm</location>
    </subcellularLocation>
    <subcellularLocation>
        <location evidence="2">Cell membrane</location>
        <topology evidence="2">Peripheral membrane protein</topology>
    </subcellularLocation>
    <subcellularLocation>
        <location evidence="2 3">Membrane</location>
        <topology evidence="2">Lipid-anchor</topology>
    </subcellularLocation>
    <text evidence="2">Associated with Golgi stacks. Post-synaptic densities of dendrites, and in the pre-synaptic nerve terminal at neuromuscular junctions.</text>
</comment>
<comment type="miscellaneous">
    <text evidence="1">Binds 3 calcium ions via the second, third and fourth EF-hand.</text>
</comment>
<comment type="similarity">
    <text evidence="5">Belongs to the recoverin family.</text>
</comment>
<protein>
    <recommendedName>
        <fullName>Neuronal calcium sensor 1</fullName>
        <shortName>NCS-1</shortName>
    </recommendedName>
    <alternativeName>
        <fullName>Frequenin homolog</fullName>
    </alternativeName>
</protein>
<accession>Q5RC90</accession>
<evidence type="ECO:0000250" key="1"/>
<evidence type="ECO:0000250" key="2">
    <source>
        <dbReference type="UniProtKB" id="P62166"/>
    </source>
</evidence>
<evidence type="ECO:0000250" key="3">
    <source>
        <dbReference type="UniProtKB" id="P62168"/>
    </source>
</evidence>
<evidence type="ECO:0000255" key="4">
    <source>
        <dbReference type="PROSITE-ProRule" id="PRU00448"/>
    </source>
</evidence>
<evidence type="ECO:0000305" key="5"/>
<dbReference type="EMBL" id="CR858390">
    <property type="protein sequence ID" value="CAH90617.1"/>
    <property type="molecule type" value="mRNA"/>
</dbReference>
<dbReference type="RefSeq" id="NP_001125334.1">
    <property type="nucleotide sequence ID" value="NM_001131862.1"/>
</dbReference>
<dbReference type="BMRB" id="Q5RC90"/>
<dbReference type="SMR" id="Q5RC90"/>
<dbReference type="STRING" id="9601.ENSPPYP00000022068"/>
<dbReference type="GeneID" id="100172236"/>
<dbReference type="KEGG" id="pon:100172236"/>
<dbReference type="CTD" id="23413"/>
<dbReference type="eggNOG" id="KOG0044">
    <property type="taxonomic scope" value="Eukaryota"/>
</dbReference>
<dbReference type="InParanoid" id="Q5RC90"/>
<dbReference type="OrthoDB" id="191686at2759"/>
<dbReference type="Proteomes" id="UP000001595">
    <property type="component" value="Unplaced"/>
</dbReference>
<dbReference type="GO" id="GO:0005794">
    <property type="term" value="C:Golgi apparatus"/>
    <property type="evidence" value="ECO:0007669"/>
    <property type="project" value="UniProtKB-SubCell"/>
</dbReference>
<dbReference type="GO" id="GO:0048471">
    <property type="term" value="C:perinuclear region of cytoplasm"/>
    <property type="evidence" value="ECO:0007669"/>
    <property type="project" value="UniProtKB-SubCell"/>
</dbReference>
<dbReference type="GO" id="GO:0005886">
    <property type="term" value="C:plasma membrane"/>
    <property type="evidence" value="ECO:0007669"/>
    <property type="project" value="UniProtKB-SubCell"/>
</dbReference>
<dbReference type="GO" id="GO:0014069">
    <property type="term" value="C:postsynaptic density"/>
    <property type="evidence" value="ECO:0007669"/>
    <property type="project" value="UniProtKB-SubCell"/>
</dbReference>
<dbReference type="GO" id="GO:0005509">
    <property type="term" value="F:calcium ion binding"/>
    <property type="evidence" value="ECO:0007669"/>
    <property type="project" value="InterPro"/>
</dbReference>
<dbReference type="GO" id="GO:0008048">
    <property type="term" value="F:calcium sensitive guanylate cyclase activator activity"/>
    <property type="evidence" value="ECO:0007669"/>
    <property type="project" value="TreeGrafter"/>
</dbReference>
<dbReference type="GO" id="GO:0005245">
    <property type="term" value="F:voltage-gated calcium channel activity"/>
    <property type="evidence" value="ECO:0000250"/>
    <property type="project" value="UniProtKB"/>
</dbReference>
<dbReference type="GO" id="GO:0010975">
    <property type="term" value="P:regulation of neuron projection development"/>
    <property type="evidence" value="ECO:0000250"/>
    <property type="project" value="UniProtKB"/>
</dbReference>
<dbReference type="CDD" id="cd00051">
    <property type="entry name" value="EFh"/>
    <property type="match status" value="2"/>
</dbReference>
<dbReference type="FunFam" id="1.10.238.10:FF:000009">
    <property type="entry name" value="Visinin-like protein 1"/>
    <property type="match status" value="1"/>
</dbReference>
<dbReference type="Gene3D" id="1.10.238.10">
    <property type="entry name" value="EF-hand"/>
    <property type="match status" value="1"/>
</dbReference>
<dbReference type="InterPro" id="IPR011992">
    <property type="entry name" value="EF-hand-dom_pair"/>
</dbReference>
<dbReference type="InterPro" id="IPR018247">
    <property type="entry name" value="EF_Hand_1_Ca_BS"/>
</dbReference>
<dbReference type="InterPro" id="IPR002048">
    <property type="entry name" value="EF_hand_dom"/>
</dbReference>
<dbReference type="InterPro" id="IPR028846">
    <property type="entry name" value="Recoverin"/>
</dbReference>
<dbReference type="PANTHER" id="PTHR23055">
    <property type="entry name" value="CALCIUM BINDING PROTEINS"/>
    <property type="match status" value="1"/>
</dbReference>
<dbReference type="PANTHER" id="PTHR23055:SF198">
    <property type="entry name" value="NEURONAL CALCIUM SENSOR 1"/>
    <property type="match status" value="1"/>
</dbReference>
<dbReference type="Pfam" id="PF13405">
    <property type="entry name" value="EF-hand_6"/>
    <property type="match status" value="1"/>
</dbReference>
<dbReference type="Pfam" id="PF13499">
    <property type="entry name" value="EF-hand_7"/>
    <property type="match status" value="1"/>
</dbReference>
<dbReference type="PRINTS" id="PR00450">
    <property type="entry name" value="RECOVERIN"/>
</dbReference>
<dbReference type="SMART" id="SM00054">
    <property type="entry name" value="EFh"/>
    <property type="match status" value="3"/>
</dbReference>
<dbReference type="SUPFAM" id="SSF47473">
    <property type="entry name" value="EF-hand"/>
    <property type="match status" value="1"/>
</dbReference>
<dbReference type="PROSITE" id="PS00018">
    <property type="entry name" value="EF_HAND_1"/>
    <property type="match status" value="3"/>
</dbReference>
<dbReference type="PROSITE" id="PS50222">
    <property type="entry name" value="EF_HAND_2"/>
    <property type="match status" value="3"/>
</dbReference>
<gene>
    <name type="primary">NCS1</name>
    <name type="synonym">FREQ</name>
</gene>
<reference key="1">
    <citation type="submission" date="2004-11" db="EMBL/GenBank/DDBJ databases">
        <authorList>
            <consortium name="The German cDNA consortium"/>
        </authorList>
    </citation>
    <scope>NUCLEOTIDE SEQUENCE [LARGE SCALE MRNA]</scope>
    <source>
        <tissue>Brain cortex</tissue>
    </source>
</reference>
<feature type="initiator methionine" description="Removed" evidence="2">
    <location>
        <position position="1"/>
    </location>
</feature>
<feature type="chain" id="PRO_0000268162" description="Neuronal calcium sensor 1">
    <location>
        <begin position="2"/>
        <end position="190"/>
    </location>
</feature>
<feature type="domain" description="EF-hand 1" evidence="5">
    <location>
        <begin position="24"/>
        <end position="59"/>
    </location>
</feature>
<feature type="domain" description="EF-hand 2" evidence="4">
    <location>
        <begin position="60"/>
        <end position="95"/>
    </location>
</feature>
<feature type="domain" description="EF-hand 3" evidence="4">
    <location>
        <begin position="96"/>
        <end position="131"/>
    </location>
</feature>
<feature type="domain" description="EF-hand 4" evidence="4">
    <location>
        <begin position="144"/>
        <end position="179"/>
    </location>
</feature>
<feature type="region of interest" description="Interaction with IL1RAPL1" evidence="2">
    <location>
        <begin position="174"/>
        <end position="190"/>
    </location>
</feature>
<feature type="binding site" evidence="4">
    <location>
        <position position="73"/>
    </location>
    <ligand>
        <name>Ca(2+)</name>
        <dbReference type="ChEBI" id="CHEBI:29108"/>
        <label>1</label>
    </ligand>
</feature>
<feature type="binding site" evidence="4">
    <location>
        <position position="75"/>
    </location>
    <ligand>
        <name>Ca(2+)</name>
        <dbReference type="ChEBI" id="CHEBI:29108"/>
        <label>1</label>
    </ligand>
</feature>
<feature type="binding site" evidence="4">
    <location>
        <position position="77"/>
    </location>
    <ligand>
        <name>Ca(2+)</name>
        <dbReference type="ChEBI" id="CHEBI:29108"/>
        <label>1</label>
    </ligand>
</feature>
<feature type="binding site" evidence="4">
    <location>
        <position position="79"/>
    </location>
    <ligand>
        <name>Ca(2+)</name>
        <dbReference type="ChEBI" id="CHEBI:29108"/>
        <label>1</label>
    </ligand>
</feature>
<feature type="binding site" evidence="4">
    <location>
        <position position="84"/>
    </location>
    <ligand>
        <name>Ca(2+)</name>
        <dbReference type="ChEBI" id="CHEBI:29108"/>
        <label>1</label>
    </ligand>
</feature>
<feature type="binding site" evidence="4">
    <location>
        <position position="109"/>
    </location>
    <ligand>
        <name>Ca(2+)</name>
        <dbReference type="ChEBI" id="CHEBI:29108"/>
        <label>2</label>
    </ligand>
</feature>
<feature type="binding site" evidence="4">
    <location>
        <position position="111"/>
    </location>
    <ligand>
        <name>Ca(2+)</name>
        <dbReference type="ChEBI" id="CHEBI:29108"/>
        <label>2</label>
    </ligand>
</feature>
<feature type="binding site" evidence="4">
    <location>
        <position position="113"/>
    </location>
    <ligand>
        <name>Ca(2+)</name>
        <dbReference type="ChEBI" id="CHEBI:29108"/>
        <label>2</label>
    </ligand>
</feature>
<feature type="binding site" evidence="4">
    <location>
        <position position="115"/>
    </location>
    <ligand>
        <name>Ca(2+)</name>
        <dbReference type="ChEBI" id="CHEBI:29108"/>
        <label>2</label>
    </ligand>
</feature>
<feature type="binding site" evidence="4">
    <location>
        <position position="120"/>
    </location>
    <ligand>
        <name>Ca(2+)</name>
        <dbReference type="ChEBI" id="CHEBI:29108"/>
        <label>2</label>
    </ligand>
</feature>
<feature type="binding site" evidence="4">
    <location>
        <position position="157"/>
    </location>
    <ligand>
        <name>Ca(2+)</name>
        <dbReference type="ChEBI" id="CHEBI:29108"/>
        <label>3</label>
    </ligand>
</feature>
<feature type="binding site" evidence="4">
    <location>
        <position position="159"/>
    </location>
    <ligand>
        <name>Ca(2+)</name>
        <dbReference type="ChEBI" id="CHEBI:29108"/>
        <label>3</label>
    </ligand>
</feature>
<feature type="binding site" evidence="4">
    <location>
        <position position="161"/>
    </location>
    <ligand>
        <name>Ca(2+)</name>
        <dbReference type="ChEBI" id="CHEBI:29108"/>
        <label>3</label>
    </ligand>
</feature>
<feature type="binding site" evidence="4">
    <location>
        <position position="163"/>
    </location>
    <ligand>
        <name>Ca(2+)</name>
        <dbReference type="ChEBI" id="CHEBI:29108"/>
        <label>3</label>
    </ligand>
</feature>
<feature type="binding site" evidence="4">
    <location>
        <position position="168"/>
    </location>
    <ligand>
        <name>Ca(2+)</name>
        <dbReference type="ChEBI" id="CHEBI:29108"/>
        <label>3</label>
    </ligand>
</feature>
<feature type="lipid moiety-binding region" description="N-myristoyl glycine" evidence="2">
    <location>
        <position position="2"/>
    </location>
</feature>
<organism>
    <name type="scientific">Pongo abelii</name>
    <name type="common">Sumatran orangutan</name>
    <name type="synonym">Pongo pygmaeus abelii</name>
    <dbReference type="NCBI Taxonomy" id="9601"/>
    <lineage>
        <taxon>Eukaryota</taxon>
        <taxon>Metazoa</taxon>
        <taxon>Chordata</taxon>
        <taxon>Craniata</taxon>
        <taxon>Vertebrata</taxon>
        <taxon>Euteleostomi</taxon>
        <taxon>Mammalia</taxon>
        <taxon>Eutheria</taxon>
        <taxon>Euarchontoglires</taxon>
        <taxon>Primates</taxon>
        <taxon>Haplorrhini</taxon>
        <taxon>Catarrhini</taxon>
        <taxon>Hominidae</taxon>
        <taxon>Pongo</taxon>
    </lineage>
</organism>
<name>NCS1_PONAB</name>
<keyword id="KW-0106">Calcium</keyword>
<keyword id="KW-1003">Cell membrane</keyword>
<keyword id="KW-0963">Cytoplasm</keyword>
<keyword id="KW-0333">Golgi apparatus</keyword>
<keyword id="KW-0449">Lipoprotein</keyword>
<keyword id="KW-0472">Membrane</keyword>
<keyword id="KW-0479">Metal-binding</keyword>
<keyword id="KW-0519">Myristate</keyword>
<keyword id="KW-1185">Reference proteome</keyword>
<keyword id="KW-0677">Repeat</keyword>
<keyword id="KW-0770">Synapse</keyword>
<proteinExistence type="evidence at transcript level"/>